<evidence type="ECO:0000255" key="1">
    <source>
        <dbReference type="PROSITE-ProRule" id="PRU00109"/>
    </source>
</evidence>
<evidence type="ECO:0000269" key="2">
    <source>
    </source>
</evidence>
<evidence type="ECO:0000269" key="3">
    <source>
    </source>
</evidence>
<evidence type="ECO:0000269" key="4">
    <source>
    </source>
</evidence>
<evidence type="ECO:0000303" key="5">
    <source>
    </source>
</evidence>
<evidence type="ECO:0000305" key="6"/>
<evidence type="ECO:0000312" key="7">
    <source>
        <dbReference type="PomBase" id="SPBC20F10.06"/>
    </source>
</evidence>
<evidence type="ECO:0007829" key="8">
    <source>
        <dbReference type="PDB" id="4AEZ"/>
    </source>
</evidence>
<keyword id="KW-0002">3D-structure</keyword>
<keyword id="KW-0131">Cell cycle</keyword>
<keyword id="KW-0132">Cell division</keyword>
<keyword id="KW-0498">Mitosis</keyword>
<keyword id="KW-0539">Nucleus</keyword>
<keyword id="KW-1185">Reference proteome</keyword>
<feature type="chain" id="PRO_0000126114" description="Mitotic spindle checkpoint component mad2">
    <location>
        <begin position="1"/>
        <end position="203"/>
    </location>
</feature>
<feature type="domain" description="HORMA" evidence="1">
    <location>
        <begin position="13"/>
        <end position="197"/>
    </location>
</feature>
<feature type="helix" evidence="8">
    <location>
        <begin position="14"/>
        <end position="33"/>
    </location>
</feature>
<feature type="helix" evidence="8">
    <location>
        <begin position="39"/>
        <end position="41"/>
    </location>
</feature>
<feature type="strand" evidence="8">
    <location>
        <begin position="42"/>
        <end position="47"/>
    </location>
</feature>
<feature type="strand" evidence="8">
    <location>
        <begin position="50"/>
        <end position="55"/>
    </location>
</feature>
<feature type="helix" evidence="8">
    <location>
        <begin position="58"/>
        <end position="76"/>
    </location>
</feature>
<feature type="strand" evidence="8">
    <location>
        <begin position="80"/>
        <end position="89"/>
    </location>
</feature>
<feature type="turn" evidence="8">
    <location>
        <begin position="90"/>
        <end position="92"/>
    </location>
</feature>
<feature type="strand" evidence="8">
    <location>
        <begin position="95"/>
        <end position="105"/>
    </location>
</feature>
<feature type="helix" evidence="8">
    <location>
        <begin position="118"/>
        <end position="137"/>
    </location>
</feature>
<feature type="helix" evidence="8">
    <location>
        <begin position="138"/>
        <end position="140"/>
    </location>
</feature>
<feature type="strand" evidence="8">
    <location>
        <begin position="149"/>
        <end position="158"/>
    </location>
</feature>
<feature type="strand" evidence="8">
    <location>
        <begin position="167"/>
        <end position="169"/>
    </location>
</feature>
<feature type="strand" evidence="8">
    <location>
        <begin position="179"/>
        <end position="187"/>
    </location>
</feature>
<feature type="strand" evidence="8">
    <location>
        <begin position="189"/>
        <end position="199"/>
    </location>
</feature>
<comment type="function">
    <text evidence="4">Feedback control that prevents cells with incompletely assembled spindles from leaving mitosis. It interacts with the anaphase promoting complex/cyclosome (APC/C) thereby inhibiting APC/C-dependent proteolysis, a step required for exit from mitosis.</text>
</comment>
<comment type="subunit">
    <text evidence="2 4">Interacts with mad3 and slp1.</text>
</comment>
<comment type="interaction">
    <interactant intactId="EBI-1269310">
        <id>O14417</id>
    </interactant>
    <interactant intactId="EBI-16079828">
        <id>P87169</id>
        <label>mad1</label>
    </interactant>
    <organismsDiffer>false</organismsDiffer>
    <experiments>4</experiments>
</comment>
<comment type="interaction">
    <interactant intactId="EBI-1269310">
        <id>O14417</id>
    </interactant>
    <interactant intactId="EBI-1269284">
        <id>O59767</id>
        <label>mad3</label>
    </interactant>
    <organismsDiffer>false</organismsDiffer>
    <experiments>5</experiments>
</comment>
<comment type="interaction">
    <interactant intactId="EBI-1269310">
        <id>O14417</id>
    </interactant>
    <interactant intactId="EBI-1252744">
        <id>P78972</id>
        <label>slp1</label>
    </interactant>
    <organismsDiffer>false</organismsDiffer>
    <experiments>8</experiments>
</comment>
<comment type="subcellular location">
    <subcellularLocation>
        <location evidence="6">Nucleus</location>
    </subcellularLocation>
</comment>
<comment type="disruption phenotype">
    <text evidence="3">Simultaneous disruption of nucleoporin alm1 results in a growth defect.</text>
</comment>
<comment type="similarity">
    <text evidence="6">Belongs to the MAD2 family.</text>
</comment>
<proteinExistence type="evidence at protein level"/>
<sequence>MSSVPIRTNFSLKGSSKLVSEFFEYAVNSILFQRGIYPAEDFKVVRKYGLNMLVSVDEEVKTYIRKIVSQLHKWMFAKKIQKLILVITSKCSGEDLERWQFNVEMVDTADQFQNIGNKEDELRVQKEIQALIRQITATVTFLPQLEEQCTFNVLVYADKDSEVPTDWVDSDPRILRDAEQVQLRSFSTSMHKIDCQVAYRVNP</sequence>
<protein>
    <recommendedName>
        <fullName>Mitotic spindle checkpoint component mad2</fullName>
    </recommendedName>
</protein>
<organism>
    <name type="scientific">Schizosaccharomyces pombe (strain 972 / ATCC 24843)</name>
    <name type="common">Fission yeast</name>
    <dbReference type="NCBI Taxonomy" id="284812"/>
    <lineage>
        <taxon>Eukaryota</taxon>
        <taxon>Fungi</taxon>
        <taxon>Dikarya</taxon>
        <taxon>Ascomycota</taxon>
        <taxon>Taphrinomycotina</taxon>
        <taxon>Schizosaccharomycetes</taxon>
        <taxon>Schizosaccharomycetales</taxon>
        <taxon>Schizosaccharomycetaceae</taxon>
        <taxon>Schizosaccharomyces</taxon>
    </lineage>
</organism>
<reference key="1">
    <citation type="journal article" date="1997" name="Proc. Natl. Acad. Sci. U.S.A.">
        <title>The Schizosaccharomyces pombe spindle checkpoint protein mad2p blocks anaphase and genetically interacts with the anaphase-promoting complex.</title>
        <authorList>
            <person name="He X."/>
            <person name="Patterson T.E."/>
            <person name="Sazer S."/>
        </authorList>
    </citation>
    <scope>NUCLEOTIDE SEQUENCE [GENOMIC DNA]</scope>
    <scope>CHARACTERIZATION</scope>
</reference>
<reference key="2">
    <citation type="journal article" date="2002" name="Nature">
        <title>The genome sequence of Schizosaccharomyces pombe.</title>
        <authorList>
            <person name="Wood V."/>
            <person name="Gwilliam R."/>
            <person name="Rajandream M.A."/>
            <person name="Lyne M.H."/>
            <person name="Lyne R."/>
            <person name="Stewart A."/>
            <person name="Sgouros J.G."/>
            <person name="Peat N."/>
            <person name="Hayles J."/>
            <person name="Baker S.G."/>
            <person name="Basham D."/>
            <person name="Bowman S."/>
            <person name="Brooks K."/>
            <person name="Brown D."/>
            <person name="Brown S."/>
            <person name="Chillingworth T."/>
            <person name="Churcher C.M."/>
            <person name="Collins M."/>
            <person name="Connor R."/>
            <person name="Cronin A."/>
            <person name="Davis P."/>
            <person name="Feltwell T."/>
            <person name="Fraser A."/>
            <person name="Gentles S."/>
            <person name="Goble A."/>
            <person name="Hamlin N."/>
            <person name="Harris D.E."/>
            <person name="Hidalgo J."/>
            <person name="Hodgson G."/>
            <person name="Holroyd S."/>
            <person name="Hornsby T."/>
            <person name="Howarth S."/>
            <person name="Huckle E.J."/>
            <person name="Hunt S."/>
            <person name="Jagels K."/>
            <person name="James K.D."/>
            <person name="Jones L."/>
            <person name="Jones M."/>
            <person name="Leather S."/>
            <person name="McDonald S."/>
            <person name="McLean J."/>
            <person name="Mooney P."/>
            <person name="Moule S."/>
            <person name="Mungall K.L."/>
            <person name="Murphy L.D."/>
            <person name="Niblett D."/>
            <person name="Odell C."/>
            <person name="Oliver K."/>
            <person name="O'Neil S."/>
            <person name="Pearson D."/>
            <person name="Quail M.A."/>
            <person name="Rabbinowitsch E."/>
            <person name="Rutherford K.M."/>
            <person name="Rutter S."/>
            <person name="Saunders D."/>
            <person name="Seeger K."/>
            <person name="Sharp S."/>
            <person name="Skelton J."/>
            <person name="Simmonds M.N."/>
            <person name="Squares R."/>
            <person name="Squares S."/>
            <person name="Stevens K."/>
            <person name="Taylor K."/>
            <person name="Taylor R.G."/>
            <person name="Tivey A."/>
            <person name="Walsh S.V."/>
            <person name="Warren T."/>
            <person name="Whitehead S."/>
            <person name="Woodward J.R."/>
            <person name="Volckaert G."/>
            <person name="Aert R."/>
            <person name="Robben J."/>
            <person name="Grymonprez B."/>
            <person name="Weltjens I."/>
            <person name="Vanstreels E."/>
            <person name="Rieger M."/>
            <person name="Schaefer M."/>
            <person name="Mueller-Auer S."/>
            <person name="Gabel C."/>
            <person name="Fuchs M."/>
            <person name="Duesterhoeft A."/>
            <person name="Fritzc C."/>
            <person name="Holzer E."/>
            <person name="Moestl D."/>
            <person name="Hilbert H."/>
            <person name="Borzym K."/>
            <person name="Langer I."/>
            <person name="Beck A."/>
            <person name="Lehrach H."/>
            <person name="Reinhardt R."/>
            <person name="Pohl T.M."/>
            <person name="Eger P."/>
            <person name="Zimmermann W."/>
            <person name="Wedler H."/>
            <person name="Wambutt R."/>
            <person name="Purnelle B."/>
            <person name="Goffeau A."/>
            <person name="Cadieu E."/>
            <person name="Dreano S."/>
            <person name="Gloux S."/>
            <person name="Lelaure V."/>
            <person name="Mottier S."/>
            <person name="Galibert F."/>
            <person name="Aves S.J."/>
            <person name="Xiang Z."/>
            <person name="Hunt C."/>
            <person name="Moore K."/>
            <person name="Hurst S.M."/>
            <person name="Lucas M."/>
            <person name="Rochet M."/>
            <person name="Gaillardin C."/>
            <person name="Tallada V.A."/>
            <person name="Garzon A."/>
            <person name="Thode G."/>
            <person name="Daga R.R."/>
            <person name="Cruzado L."/>
            <person name="Jimenez J."/>
            <person name="Sanchez M."/>
            <person name="del Rey F."/>
            <person name="Benito J."/>
            <person name="Dominguez A."/>
            <person name="Revuelta J.L."/>
            <person name="Moreno S."/>
            <person name="Armstrong J."/>
            <person name="Forsburg S.L."/>
            <person name="Cerutti L."/>
            <person name="Lowe T."/>
            <person name="McCombie W.R."/>
            <person name="Paulsen I."/>
            <person name="Potashkin J."/>
            <person name="Shpakovski G.V."/>
            <person name="Ussery D."/>
            <person name="Barrell B.G."/>
            <person name="Nurse P."/>
        </authorList>
    </citation>
    <scope>NUCLEOTIDE SEQUENCE [LARGE SCALE GENOMIC DNA]</scope>
    <source>
        <strain>972 / ATCC 24843</strain>
    </source>
</reference>
<reference key="3">
    <citation type="journal article" date="1998" name="Science">
        <title>Fission yeast Slp1: an effector of the Mad2-dependent spindle checkpoint.</title>
        <authorList>
            <person name="Kim S.H."/>
            <person name="Lin D.P."/>
            <person name="Matsumoto S."/>
            <person name="Kitazono A."/>
            <person name="Matsumoto T."/>
        </authorList>
    </citation>
    <scope>FUNCTION</scope>
    <scope>INTERACTION WITH SLP1</scope>
</reference>
<reference key="4">
    <citation type="journal article" date="2002" name="Mol. Cell. Biol.">
        <title>Fission yeast Mad3p is required for Mad2p to inhibit the anaphase-promoting complex and localizes to kinetochores in a Bub1p-, Bub3p-, and Mph1p-dependent manner.</title>
        <authorList>
            <person name="Millband D.N."/>
            <person name="Hardwick K.G."/>
        </authorList>
    </citation>
    <scope>INTERACTION WITH MAD3</scope>
</reference>
<reference key="5">
    <citation type="journal article" date="2017" name="J. Cell Biol.">
        <title>The fission yeast nucleoporin Alm1 is required for proteasomal degradation of kinetochore components.</title>
        <authorList>
            <person name="Salas-Pino S."/>
            <person name="Gallardo P."/>
            <person name="Barrales R.R."/>
            <person name="Braun S."/>
            <person name="Daga R.R."/>
        </authorList>
    </citation>
    <scope>DISRUPTION PHENOTYPE</scope>
</reference>
<name>MAD2_SCHPO</name>
<accession>O14417</accession>
<gene>
    <name evidence="5" type="primary">mad2</name>
    <name evidence="7" type="ORF">SPBC20F10.06</name>
</gene>
<dbReference type="EMBL" id="U72150">
    <property type="protein sequence ID" value="AAB68597.1"/>
    <property type="molecule type" value="Genomic_RNA"/>
</dbReference>
<dbReference type="EMBL" id="CU329671">
    <property type="protein sequence ID" value="CAA16846.1"/>
    <property type="molecule type" value="Genomic_DNA"/>
</dbReference>
<dbReference type="PIR" id="T39877">
    <property type="entry name" value="T39877"/>
</dbReference>
<dbReference type="RefSeq" id="NP_596370.1">
    <property type="nucleotide sequence ID" value="NM_001022291.2"/>
</dbReference>
<dbReference type="PDB" id="4AEZ">
    <property type="method" value="X-ray"/>
    <property type="resolution" value="2.30 A"/>
    <property type="chains" value="B/E/H=1-203"/>
</dbReference>
<dbReference type="PDBsum" id="4AEZ"/>
<dbReference type="SMR" id="O14417"/>
<dbReference type="BioGRID" id="277115">
    <property type="interactions" value="118"/>
</dbReference>
<dbReference type="ComplexPortal" id="CPX-3924">
    <property type="entry name" value="Mitotic Checkpoint Complex"/>
</dbReference>
<dbReference type="DIP" id="DIP-38037N"/>
<dbReference type="FunCoup" id="O14417">
    <property type="interactions" value="889"/>
</dbReference>
<dbReference type="IntAct" id="O14417">
    <property type="interactions" value="3"/>
</dbReference>
<dbReference type="STRING" id="284812.O14417"/>
<dbReference type="iPTMnet" id="O14417"/>
<dbReference type="PaxDb" id="4896-SPBC20F10.06.1"/>
<dbReference type="EnsemblFungi" id="SPBC20F10.06.1">
    <property type="protein sequence ID" value="SPBC20F10.06.1:pep"/>
    <property type="gene ID" value="SPBC20F10.06"/>
</dbReference>
<dbReference type="GeneID" id="2540589"/>
<dbReference type="KEGG" id="spo:2540589"/>
<dbReference type="PomBase" id="SPBC20F10.06">
    <property type="gene designation" value="mad2"/>
</dbReference>
<dbReference type="VEuPathDB" id="FungiDB:SPBC20F10.06"/>
<dbReference type="eggNOG" id="KOG3285">
    <property type="taxonomic scope" value="Eukaryota"/>
</dbReference>
<dbReference type="HOGENOM" id="CLU_072097_0_0_1"/>
<dbReference type="InParanoid" id="O14417"/>
<dbReference type="OMA" id="WQFDVEI"/>
<dbReference type="PhylomeDB" id="O14417"/>
<dbReference type="Reactome" id="R-SPO-141405">
    <property type="pathway name" value="Inhibition of the proteolytic activity of APC/C required for the onset of anaphase by mitotic spindle checkpoint components"/>
</dbReference>
<dbReference type="Reactome" id="R-SPO-141430">
    <property type="pathway name" value="Inactivation of APC/C via direct inhibition of the APC/C complex"/>
</dbReference>
<dbReference type="EvolutionaryTrace" id="O14417"/>
<dbReference type="PRO" id="PR:O14417"/>
<dbReference type="Proteomes" id="UP000002485">
    <property type="component" value="Chromosome II"/>
</dbReference>
<dbReference type="GO" id="GO:0000785">
    <property type="term" value="C:chromatin"/>
    <property type="evidence" value="ECO:0000314"/>
    <property type="project" value="PomBase"/>
</dbReference>
<dbReference type="GO" id="GO:0005737">
    <property type="term" value="C:cytoplasm"/>
    <property type="evidence" value="ECO:0000318"/>
    <property type="project" value="GO_Central"/>
</dbReference>
<dbReference type="GO" id="GO:0000776">
    <property type="term" value="C:kinetochore"/>
    <property type="evidence" value="ECO:0000314"/>
    <property type="project" value="PomBase"/>
</dbReference>
<dbReference type="GO" id="GO:0033597">
    <property type="term" value="C:mitotic checkpoint complex"/>
    <property type="evidence" value="ECO:0000314"/>
    <property type="project" value="PomBase"/>
</dbReference>
<dbReference type="GO" id="GO:1990498">
    <property type="term" value="C:mitotic spindle microtubule"/>
    <property type="evidence" value="ECO:0000314"/>
    <property type="project" value="PomBase"/>
</dbReference>
<dbReference type="GO" id="GO:0044732">
    <property type="term" value="C:mitotic spindle pole body"/>
    <property type="evidence" value="ECO:0000314"/>
    <property type="project" value="PomBase"/>
</dbReference>
<dbReference type="GO" id="GO:0034399">
    <property type="term" value="C:nuclear periphery"/>
    <property type="evidence" value="ECO:0000314"/>
    <property type="project" value="PomBase"/>
</dbReference>
<dbReference type="GO" id="GO:0005654">
    <property type="term" value="C:nucleoplasm"/>
    <property type="evidence" value="ECO:0000318"/>
    <property type="project" value="GO_Central"/>
</dbReference>
<dbReference type="GO" id="GO:0010997">
    <property type="term" value="F:anaphase-promoting complex binding"/>
    <property type="evidence" value="ECO:0000353"/>
    <property type="project" value="PomBase"/>
</dbReference>
<dbReference type="GO" id="GO:0051301">
    <property type="term" value="P:cell division"/>
    <property type="evidence" value="ECO:0007669"/>
    <property type="project" value="UniProtKB-KW"/>
</dbReference>
<dbReference type="GO" id="GO:1905318">
    <property type="term" value="P:meiosis I spindle assembly checkpoint signaling"/>
    <property type="evidence" value="ECO:0000315"/>
    <property type="project" value="PomBase"/>
</dbReference>
<dbReference type="GO" id="GO:0033316">
    <property type="term" value="P:meiotic spindle assembly checkpoint signaling"/>
    <property type="evidence" value="ECO:0000315"/>
    <property type="project" value="PomBase"/>
</dbReference>
<dbReference type="GO" id="GO:0007094">
    <property type="term" value="P:mitotic spindle assembly checkpoint signaling"/>
    <property type="evidence" value="ECO:0000315"/>
    <property type="project" value="PomBase"/>
</dbReference>
<dbReference type="GO" id="GO:0045841">
    <property type="term" value="P:negative regulation of mitotic metaphase/anaphase transition"/>
    <property type="evidence" value="ECO:0000353"/>
    <property type="project" value="PomBase"/>
</dbReference>
<dbReference type="FunFam" id="3.30.900.10:FF:000002">
    <property type="entry name" value="Mitotic spindle assembly checkpoint protein MAD2A"/>
    <property type="match status" value="1"/>
</dbReference>
<dbReference type="Gene3D" id="3.30.900.10">
    <property type="entry name" value="HORMA domain"/>
    <property type="match status" value="1"/>
</dbReference>
<dbReference type="InterPro" id="IPR003511">
    <property type="entry name" value="HORMA_dom"/>
</dbReference>
<dbReference type="InterPro" id="IPR036570">
    <property type="entry name" value="HORMA_dom_sf"/>
</dbReference>
<dbReference type="InterPro" id="IPR045091">
    <property type="entry name" value="Mad2-like"/>
</dbReference>
<dbReference type="PANTHER" id="PTHR11842">
    <property type="entry name" value="MITOTIC SPINDLE ASSEMBLY CHECKPOINT PROTEIN MAD2"/>
    <property type="match status" value="1"/>
</dbReference>
<dbReference type="PANTHER" id="PTHR11842:SF11">
    <property type="entry name" value="MITOTIC SPINDLE ASSEMBLY CHECKPOINT PROTEIN MAD2A"/>
    <property type="match status" value="1"/>
</dbReference>
<dbReference type="Pfam" id="PF02301">
    <property type="entry name" value="HORMA"/>
    <property type="match status" value="1"/>
</dbReference>
<dbReference type="SUPFAM" id="SSF56019">
    <property type="entry name" value="The spindle assembly checkpoint protein mad2"/>
    <property type="match status" value="1"/>
</dbReference>
<dbReference type="PROSITE" id="PS50815">
    <property type="entry name" value="HORMA"/>
    <property type="match status" value="1"/>
</dbReference>